<protein>
    <recommendedName>
        <fullName>Rhodocoxin</fullName>
    </recommendedName>
</protein>
<comment type="function">
    <text>Ferredoxin-type protein which transfers electrons from rhodocoxin reductase to cytochrome CYP116 (ThcB), which is involved in the degradation of thiocarbamate herbicides.</text>
</comment>
<comment type="cofactor">
    <cofactor evidence="1">
        <name>[2Fe-2S] cluster</name>
        <dbReference type="ChEBI" id="CHEBI:190135"/>
    </cofactor>
    <text evidence="1">Binds 1 [2Fe-2S] cluster.</text>
</comment>
<comment type="similarity">
    <text evidence="4">Belongs to the adrenodoxin/putidaredoxin family.</text>
</comment>
<proteinExistence type="evidence at protein level"/>
<sequence>MPTVTYVHPDGTKHEVEVPTGKRVMQAAIGAGIDGIVAECGGQAMCATCHVYVESPWADKFPSISEEEDEMLDDTVSPRTEASRLSCQLVVSDDVDGLIVRLPEEQV</sequence>
<feature type="initiator methionine" description="Removed" evidence="3">
    <location>
        <position position="1"/>
    </location>
</feature>
<feature type="chain" id="PRO_0000201163" description="Rhodocoxin">
    <location>
        <begin position="2"/>
        <end position="107"/>
    </location>
</feature>
<feature type="domain" description="2Fe-2S ferredoxin-type" evidence="2">
    <location>
        <begin position="2"/>
        <end position="106"/>
    </location>
</feature>
<feature type="binding site" evidence="2">
    <location>
        <position position="40"/>
    </location>
    <ligand>
        <name>[2Fe-2S] cluster</name>
        <dbReference type="ChEBI" id="CHEBI:190135"/>
    </ligand>
</feature>
<feature type="binding site" evidence="2">
    <location>
        <position position="46"/>
    </location>
    <ligand>
        <name>[2Fe-2S] cluster</name>
        <dbReference type="ChEBI" id="CHEBI:190135"/>
    </ligand>
</feature>
<feature type="binding site" evidence="2">
    <location>
        <position position="49"/>
    </location>
    <ligand>
        <name>[2Fe-2S] cluster</name>
        <dbReference type="ChEBI" id="CHEBI:190135"/>
    </ligand>
</feature>
<feature type="binding site" evidence="2">
    <location>
        <position position="87"/>
    </location>
    <ligand>
        <name>[2Fe-2S] cluster</name>
        <dbReference type="ChEBI" id="CHEBI:190135"/>
    </ligand>
</feature>
<keyword id="KW-0001">2Fe-2S</keyword>
<keyword id="KW-0903">Direct protein sequencing</keyword>
<keyword id="KW-0249">Electron transport</keyword>
<keyword id="KW-0408">Iron</keyword>
<keyword id="KW-0411">Iron-sulfur</keyword>
<keyword id="KW-0479">Metal-binding</keyword>
<keyword id="KW-0813">Transport</keyword>
<name>THCC_RHOER</name>
<gene>
    <name type="primary">thcC</name>
</gene>
<evidence type="ECO:0000250" key="1"/>
<evidence type="ECO:0000255" key="2">
    <source>
        <dbReference type="PROSITE-ProRule" id="PRU00465"/>
    </source>
</evidence>
<evidence type="ECO:0000269" key="3">
    <source>
    </source>
</evidence>
<evidence type="ECO:0000305" key="4"/>
<dbReference type="EMBL" id="U17130">
    <property type="protein sequence ID" value="AAC45751.1"/>
    <property type="molecule type" value="Genomic_DNA"/>
</dbReference>
<dbReference type="RefSeq" id="WP_015889129.1">
    <property type="nucleotide sequence ID" value="NZ_JABBPH010000001.1"/>
</dbReference>
<dbReference type="SMR" id="P43493"/>
<dbReference type="GO" id="GO:0005829">
    <property type="term" value="C:cytosol"/>
    <property type="evidence" value="ECO:0007669"/>
    <property type="project" value="TreeGrafter"/>
</dbReference>
<dbReference type="GO" id="GO:0051537">
    <property type="term" value="F:2 iron, 2 sulfur cluster binding"/>
    <property type="evidence" value="ECO:0007669"/>
    <property type="project" value="UniProtKB-KW"/>
</dbReference>
<dbReference type="GO" id="GO:0009055">
    <property type="term" value="F:electron transfer activity"/>
    <property type="evidence" value="ECO:0007669"/>
    <property type="project" value="TreeGrafter"/>
</dbReference>
<dbReference type="GO" id="GO:0046872">
    <property type="term" value="F:metal ion binding"/>
    <property type="evidence" value="ECO:0007669"/>
    <property type="project" value="UniProtKB-KW"/>
</dbReference>
<dbReference type="GO" id="GO:0140647">
    <property type="term" value="P:P450-containing electron transport chain"/>
    <property type="evidence" value="ECO:0007669"/>
    <property type="project" value="InterPro"/>
</dbReference>
<dbReference type="CDD" id="cd00207">
    <property type="entry name" value="fer2"/>
    <property type="match status" value="1"/>
</dbReference>
<dbReference type="Gene3D" id="3.10.20.30">
    <property type="match status" value="1"/>
</dbReference>
<dbReference type="InterPro" id="IPR036010">
    <property type="entry name" value="2Fe-2S_ferredoxin-like_sf"/>
</dbReference>
<dbReference type="InterPro" id="IPR001041">
    <property type="entry name" value="2Fe-2S_ferredoxin-type"/>
</dbReference>
<dbReference type="InterPro" id="IPR001055">
    <property type="entry name" value="Adrenodoxin-like"/>
</dbReference>
<dbReference type="InterPro" id="IPR018298">
    <property type="entry name" value="Adrenodoxin_Fe-S_BS"/>
</dbReference>
<dbReference type="InterPro" id="IPR012675">
    <property type="entry name" value="Beta-grasp_dom_sf"/>
</dbReference>
<dbReference type="PANTHER" id="PTHR23426:SF65">
    <property type="entry name" value="FERREDOXIN-2, MITOCHONDRIAL"/>
    <property type="match status" value="1"/>
</dbReference>
<dbReference type="PANTHER" id="PTHR23426">
    <property type="entry name" value="FERREDOXIN/ADRENODOXIN"/>
    <property type="match status" value="1"/>
</dbReference>
<dbReference type="Pfam" id="PF00111">
    <property type="entry name" value="Fer2"/>
    <property type="match status" value="1"/>
</dbReference>
<dbReference type="PRINTS" id="PR00355">
    <property type="entry name" value="ADRENODOXIN"/>
</dbReference>
<dbReference type="SUPFAM" id="SSF54292">
    <property type="entry name" value="2Fe-2S ferredoxin-like"/>
    <property type="match status" value="1"/>
</dbReference>
<dbReference type="PROSITE" id="PS51085">
    <property type="entry name" value="2FE2S_FER_2"/>
    <property type="match status" value="1"/>
</dbReference>
<dbReference type="PROSITE" id="PS00814">
    <property type="entry name" value="ADX"/>
    <property type="match status" value="1"/>
</dbReference>
<accession>P43493</accession>
<organism>
    <name type="scientific">Rhodococcus erythropolis</name>
    <name type="common">Arthrobacter picolinophilus</name>
    <dbReference type="NCBI Taxonomy" id="1833"/>
    <lineage>
        <taxon>Bacteria</taxon>
        <taxon>Bacillati</taxon>
        <taxon>Actinomycetota</taxon>
        <taxon>Actinomycetes</taxon>
        <taxon>Mycobacteriales</taxon>
        <taxon>Nocardiaceae</taxon>
        <taxon>Rhodococcus</taxon>
        <taxon>Rhodococcus erythropolis group</taxon>
    </lineage>
</organism>
<reference key="1">
    <citation type="journal article" date="1995" name="J. Bacteriol.">
        <title>Degradation of the thiocarbamate herbicide EPTC (S-ethyl dipropylcarbamothioate) and biosafening by Rhodococcus sp. strain NI86/21 involve an inducible cytochrome P-450 system and aldehyde dehydrogenase.</title>
        <authorList>
            <person name="Nagy I."/>
            <person name="Schoofs G."/>
            <person name="Compernolle F."/>
            <person name="Proost P."/>
            <person name="Vanderleyden J."/>
            <person name="de Mot R."/>
        </authorList>
    </citation>
    <scope>NUCLEOTIDE SEQUENCE [GENOMIC DNA]</scope>
    <scope>PROTEIN SEQUENCE OF 2-8</scope>
    <source>
        <strain>NI86/21</strain>
    </source>
</reference>